<gene>
    <name type="primary">rpl10a</name>
</gene>
<dbReference type="EMBL" id="AF401564">
    <property type="protein sequence ID" value="AAK95136.1"/>
    <property type="molecule type" value="mRNA"/>
</dbReference>
<dbReference type="RefSeq" id="NP_001187211.1">
    <property type="nucleotide sequence ID" value="NM_001200282.1"/>
</dbReference>
<dbReference type="SMR" id="Q90YV8"/>
<dbReference type="STRING" id="7998.ENSIPUP00000001043"/>
<dbReference type="GeneID" id="100305047"/>
<dbReference type="KEGG" id="ipu:100305047"/>
<dbReference type="CTD" id="4736"/>
<dbReference type="OMA" id="GPRNKMP"/>
<dbReference type="OrthoDB" id="2449818at2759"/>
<dbReference type="Proteomes" id="UP000221080">
    <property type="component" value="Chromosome 5"/>
</dbReference>
<dbReference type="GO" id="GO:0005737">
    <property type="term" value="C:cytoplasm"/>
    <property type="evidence" value="ECO:0007669"/>
    <property type="project" value="UniProtKB-SubCell"/>
</dbReference>
<dbReference type="GO" id="GO:0015934">
    <property type="term" value="C:large ribosomal subunit"/>
    <property type="evidence" value="ECO:0007669"/>
    <property type="project" value="InterPro"/>
</dbReference>
<dbReference type="GO" id="GO:0003723">
    <property type="term" value="F:RNA binding"/>
    <property type="evidence" value="ECO:0007669"/>
    <property type="project" value="InterPro"/>
</dbReference>
<dbReference type="GO" id="GO:0003735">
    <property type="term" value="F:structural constituent of ribosome"/>
    <property type="evidence" value="ECO:0007669"/>
    <property type="project" value="InterPro"/>
</dbReference>
<dbReference type="GO" id="GO:0006412">
    <property type="term" value="P:translation"/>
    <property type="evidence" value="ECO:0007669"/>
    <property type="project" value="InterPro"/>
</dbReference>
<dbReference type="CDD" id="cd00403">
    <property type="entry name" value="Ribosomal_L1"/>
    <property type="match status" value="1"/>
</dbReference>
<dbReference type="FunFam" id="3.30.190.20:FF:000006">
    <property type="entry name" value="Ribosomal protein"/>
    <property type="match status" value="1"/>
</dbReference>
<dbReference type="FunFam" id="3.40.50.790:FF:000002">
    <property type="entry name" value="Ribosomal protein"/>
    <property type="match status" value="1"/>
</dbReference>
<dbReference type="FunFam" id="3.30.190.20:FF:000009">
    <property type="entry name" value="Ribosomal protein L10a"/>
    <property type="match status" value="1"/>
</dbReference>
<dbReference type="Gene3D" id="3.30.190.20">
    <property type="match status" value="1"/>
</dbReference>
<dbReference type="Gene3D" id="3.40.50.790">
    <property type="match status" value="1"/>
</dbReference>
<dbReference type="InterPro" id="IPR050257">
    <property type="entry name" value="eL8/uL1-like"/>
</dbReference>
<dbReference type="InterPro" id="IPR002143">
    <property type="entry name" value="Ribosomal_uL1"/>
</dbReference>
<dbReference type="InterPro" id="IPR023674">
    <property type="entry name" value="Ribosomal_uL1-like"/>
</dbReference>
<dbReference type="InterPro" id="IPR028364">
    <property type="entry name" value="Ribosomal_uL1/biogenesis"/>
</dbReference>
<dbReference type="InterPro" id="IPR016095">
    <property type="entry name" value="Ribosomal_uL1_3-a/b-sand"/>
</dbReference>
<dbReference type="InterPro" id="IPR023673">
    <property type="entry name" value="Ribosomal_uL1_CS"/>
</dbReference>
<dbReference type="PANTHER" id="PTHR23105">
    <property type="entry name" value="RIBOSOMAL PROTEIN L7AE FAMILY MEMBER"/>
    <property type="match status" value="1"/>
</dbReference>
<dbReference type="Pfam" id="PF00687">
    <property type="entry name" value="Ribosomal_L1"/>
    <property type="match status" value="1"/>
</dbReference>
<dbReference type="PIRSF" id="PIRSF002155">
    <property type="entry name" value="Ribosomal_L1"/>
    <property type="match status" value="1"/>
</dbReference>
<dbReference type="SUPFAM" id="SSF56808">
    <property type="entry name" value="Ribosomal protein L1"/>
    <property type="match status" value="1"/>
</dbReference>
<dbReference type="PROSITE" id="PS01199">
    <property type="entry name" value="RIBOSOMAL_L1"/>
    <property type="match status" value="1"/>
</dbReference>
<comment type="function">
    <text evidence="1">Component of the large ribosomal subunit. The ribosome is a large ribonucleoprotein complex responsible for the synthesis of proteins in the cell.</text>
</comment>
<comment type="subunit">
    <text evidence="1">Component of the large ribosomal subunit.</text>
</comment>
<comment type="subcellular location">
    <subcellularLocation>
        <location evidence="1">Cytoplasm</location>
    </subcellularLocation>
</comment>
<comment type="similarity">
    <text evidence="2">Belongs to the universal ribosomal protein uL1 family.</text>
</comment>
<accession>Q90YV8</accession>
<keyword id="KW-0963">Cytoplasm</keyword>
<keyword id="KW-0687">Ribonucleoprotein</keyword>
<keyword id="KW-0689">Ribosomal protein</keyword>
<proteinExistence type="evidence at transcript level"/>
<protein>
    <recommendedName>
        <fullName evidence="2">Large ribosomal subunit protein uL1</fullName>
    </recommendedName>
    <alternativeName>
        <fullName>60S ribosomal protein L10a</fullName>
    </alternativeName>
</protein>
<reference key="1">
    <citation type="journal article" date="2003" name="Gene">
        <title>Translational machinery of channel catfish: II. Complementary DNA and expression of the complete set of 47 60S ribosomal proteins.</title>
        <authorList>
            <person name="Patterson A.P."/>
            <person name="Karsi A."/>
            <person name="Feng J."/>
            <person name="Liu Z.J."/>
        </authorList>
    </citation>
    <scope>NUCLEOTIDE SEQUENCE [MRNA]</scope>
</reference>
<organism>
    <name type="scientific">Ictalurus punctatus</name>
    <name type="common">Channel catfish</name>
    <name type="synonym">Silurus punctatus</name>
    <dbReference type="NCBI Taxonomy" id="7998"/>
    <lineage>
        <taxon>Eukaryota</taxon>
        <taxon>Metazoa</taxon>
        <taxon>Chordata</taxon>
        <taxon>Craniata</taxon>
        <taxon>Vertebrata</taxon>
        <taxon>Euteleostomi</taxon>
        <taxon>Actinopterygii</taxon>
        <taxon>Neopterygii</taxon>
        <taxon>Teleostei</taxon>
        <taxon>Ostariophysi</taxon>
        <taxon>Siluriformes</taxon>
        <taxon>Ictaluridae</taxon>
        <taxon>Ictalurus</taxon>
    </lineage>
</organism>
<sequence>MSKVSRDTLYEAVREVQAGSISKRRKFLETVELQISLKNYDPQKDKRFSGTVRLKTTPRPKFSVCVLGDQQHCDEAKAAEIPHMDIEALKKLNKNKKMVKKLAKKYDAFLASESLIKQIPRILGPGLNKAGKFPSLLTHNENLNTKVDEVKSTIKFQMKKVLCLAVAVGHVRMSEDELVYNIHLAVNFLVSLLKKNWQNVRALYIKSSMGKPQRLY</sequence>
<evidence type="ECO:0000250" key="1">
    <source>
        <dbReference type="UniProtKB" id="P62906"/>
    </source>
</evidence>
<evidence type="ECO:0000305" key="2"/>
<name>RL10A_ICTPU</name>
<feature type="chain" id="PRO_0000125825" description="Large ribosomal subunit protein uL1">
    <location>
        <begin position="1"/>
        <end position="216"/>
    </location>
</feature>